<reference key="1">
    <citation type="journal article" date="2002" name="Cryptogam. Bryol.">
        <title>The systematic position of the Hypoptergiaceae (Bryopsida) inferred from rps4 gene sequences.</title>
        <authorList>
            <person name="Bloecher R."/>
            <person name="Capesius I."/>
        </authorList>
    </citation>
    <scope>NUCLEOTIDE SEQUENCE [GENOMIC DNA]</scope>
    <source>
        <tissue>Gametophyte</tissue>
    </source>
</reference>
<comment type="function">
    <text evidence="1">One of the primary rRNA binding proteins, it binds directly to 16S rRNA where it nucleates assembly of the body of the 30S subunit.</text>
</comment>
<comment type="function">
    <text evidence="1">With S5 and S12 plays an important role in translational accuracy.</text>
</comment>
<comment type="subunit">
    <text evidence="1">Part of the 30S ribosomal subunit. Contacts protein S5. The interaction surface between S4 and S5 is involved in control of translational fidelity (By similarity).</text>
</comment>
<comment type="subcellular location">
    <subcellularLocation>
        <location>Plastid</location>
        <location>Chloroplast</location>
    </subcellularLocation>
</comment>
<comment type="similarity">
    <text evidence="2">Belongs to the universal ribosomal protein uS4 family.</text>
</comment>
<keyword id="KW-0150">Chloroplast</keyword>
<keyword id="KW-0934">Plastid</keyword>
<keyword id="KW-0687">Ribonucleoprotein</keyword>
<keyword id="KW-0689">Ribosomal protein</keyword>
<keyword id="KW-0694">RNA-binding</keyword>
<keyword id="KW-0699">rRNA-binding</keyword>
<sequence>MSRYRGPRVRIIRRLGALPGLTSKTPQLKSSSINQSTSNKKISQYRIRLEEKQKLRFHYGITERQLLNYVRIARKAKGSTGEVLLQLLEMRLDNVIFRLGMAPTIPGARQLVNHRHILVNDYVVDIPSYRCKPQDFITIKNQQKSETIISKNIEFYQKYKIPNHLTYSSLEKKGLINQILDRESIGLKINELLVVEYYSRQA</sequence>
<gene>
    <name type="primary">rps4</name>
</gene>
<proteinExistence type="inferred from homology"/>
<evidence type="ECO:0000250" key="1"/>
<evidence type="ECO:0000305" key="2"/>
<organism>
    <name type="scientific">Arbusculohypopterygium arbuscula</name>
    <name type="common">Moss</name>
    <name type="synonym">Hypopterygium arbuscula</name>
    <dbReference type="NCBI Taxonomy" id="98738"/>
    <lineage>
        <taxon>Eukaryota</taxon>
        <taxon>Viridiplantae</taxon>
        <taxon>Streptophyta</taxon>
        <taxon>Embryophyta</taxon>
        <taxon>Bryophyta</taxon>
        <taxon>Bryophytina</taxon>
        <taxon>Bryopsida</taxon>
        <taxon>Bryidae</taxon>
        <taxon>Hypnanae</taxon>
        <taxon>Hookeriales</taxon>
        <taxon>Hypopterygiaceae</taxon>
        <taxon>Arbusculohypopterygium</taxon>
    </lineage>
</organism>
<protein>
    <recommendedName>
        <fullName evidence="2">Small ribosomal subunit protein uS4c</fullName>
    </recommendedName>
    <alternativeName>
        <fullName>30S ribosomal protein S4, chloroplastic</fullName>
    </alternativeName>
</protein>
<dbReference type="EMBL" id="AJ252293">
    <property type="protein sequence ID" value="CAC81026.1"/>
    <property type="molecule type" value="Genomic_DNA"/>
</dbReference>
<dbReference type="SMR" id="P59141"/>
<dbReference type="GO" id="GO:0009507">
    <property type="term" value="C:chloroplast"/>
    <property type="evidence" value="ECO:0007669"/>
    <property type="project" value="UniProtKB-SubCell"/>
</dbReference>
<dbReference type="GO" id="GO:0015935">
    <property type="term" value="C:small ribosomal subunit"/>
    <property type="evidence" value="ECO:0007669"/>
    <property type="project" value="InterPro"/>
</dbReference>
<dbReference type="GO" id="GO:0019843">
    <property type="term" value="F:rRNA binding"/>
    <property type="evidence" value="ECO:0007669"/>
    <property type="project" value="UniProtKB-UniRule"/>
</dbReference>
<dbReference type="GO" id="GO:0003735">
    <property type="term" value="F:structural constituent of ribosome"/>
    <property type="evidence" value="ECO:0007669"/>
    <property type="project" value="InterPro"/>
</dbReference>
<dbReference type="GO" id="GO:0042274">
    <property type="term" value="P:ribosomal small subunit biogenesis"/>
    <property type="evidence" value="ECO:0007669"/>
    <property type="project" value="TreeGrafter"/>
</dbReference>
<dbReference type="GO" id="GO:0006412">
    <property type="term" value="P:translation"/>
    <property type="evidence" value="ECO:0007669"/>
    <property type="project" value="UniProtKB-UniRule"/>
</dbReference>
<dbReference type="CDD" id="cd00165">
    <property type="entry name" value="S4"/>
    <property type="match status" value="1"/>
</dbReference>
<dbReference type="FunFam" id="1.10.1050.10:FF:000002">
    <property type="entry name" value="30S ribosomal protein S4, chloroplastic"/>
    <property type="match status" value="1"/>
</dbReference>
<dbReference type="FunFam" id="3.10.290.10:FF:000081">
    <property type="entry name" value="30S ribosomal protein S4, chloroplastic"/>
    <property type="match status" value="1"/>
</dbReference>
<dbReference type="Gene3D" id="1.10.1050.10">
    <property type="entry name" value="Ribosomal Protein S4 Delta 41, Chain A, domain 1"/>
    <property type="match status" value="1"/>
</dbReference>
<dbReference type="Gene3D" id="3.10.290.10">
    <property type="entry name" value="RNA-binding S4 domain"/>
    <property type="match status" value="1"/>
</dbReference>
<dbReference type="HAMAP" id="MF_01306_B">
    <property type="entry name" value="Ribosomal_uS4_B"/>
    <property type="match status" value="1"/>
</dbReference>
<dbReference type="InterPro" id="IPR022801">
    <property type="entry name" value="Ribosomal_uS4"/>
</dbReference>
<dbReference type="InterPro" id="IPR005709">
    <property type="entry name" value="Ribosomal_uS4_bac-type"/>
</dbReference>
<dbReference type="InterPro" id="IPR018079">
    <property type="entry name" value="Ribosomal_uS4_CS"/>
</dbReference>
<dbReference type="InterPro" id="IPR001912">
    <property type="entry name" value="Ribosomal_uS4_N"/>
</dbReference>
<dbReference type="InterPro" id="IPR002942">
    <property type="entry name" value="S4_RNA-bd"/>
</dbReference>
<dbReference type="InterPro" id="IPR036986">
    <property type="entry name" value="S4_RNA-bd_sf"/>
</dbReference>
<dbReference type="NCBIfam" id="NF003717">
    <property type="entry name" value="PRK05327.1"/>
    <property type="match status" value="1"/>
</dbReference>
<dbReference type="NCBIfam" id="TIGR01017">
    <property type="entry name" value="rpsD_bact"/>
    <property type="match status" value="1"/>
</dbReference>
<dbReference type="PANTHER" id="PTHR11831">
    <property type="entry name" value="30S 40S RIBOSOMAL PROTEIN"/>
    <property type="match status" value="1"/>
</dbReference>
<dbReference type="PANTHER" id="PTHR11831:SF4">
    <property type="entry name" value="SMALL RIBOSOMAL SUBUNIT PROTEIN US4M"/>
    <property type="match status" value="1"/>
</dbReference>
<dbReference type="Pfam" id="PF00163">
    <property type="entry name" value="Ribosomal_S4"/>
    <property type="match status" value="1"/>
</dbReference>
<dbReference type="Pfam" id="PF01479">
    <property type="entry name" value="S4"/>
    <property type="match status" value="1"/>
</dbReference>
<dbReference type="SMART" id="SM01390">
    <property type="entry name" value="Ribosomal_S4"/>
    <property type="match status" value="1"/>
</dbReference>
<dbReference type="SMART" id="SM00363">
    <property type="entry name" value="S4"/>
    <property type="match status" value="1"/>
</dbReference>
<dbReference type="SUPFAM" id="SSF55174">
    <property type="entry name" value="Alpha-L RNA-binding motif"/>
    <property type="match status" value="1"/>
</dbReference>
<dbReference type="PROSITE" id="PS00632">
    <property type="entry name" value="RIBOSOMAL_S4"/>
    <property type="match status" value="1"/>
</dbReference>
<dbReference type="PROSITE" id="PS50889">
    <property type="entry name" value="S4"/>
    <property type="match status" value="1"/>
</dbReference>
<geneLocation type="chloroplast"/>
<accession>P59141</accession>
<feature type="chain" id="PRO_0000132605" description="Small ribosomal subunit protein uS4c">
    <location>
        <begin position="1"/>
        <end position="202"/>
    </location>
</feature>
<feature type="domain" description="S4 RNA-binding">
    <location>
        <begin position="90"/>
        <end position="153"/>
    </location>
</feature>
<name>RR4_ARBAR</name>